<protein>
    <recommendedName>
        <fullName evidence="1">UPF0319 protein VP0761</fullName>
    </recommendedName>
</protein>
<feature type="signal peptide" evidence="1">
    <location>
        <begin position="1"/>
        <end position="20"/>
    </location>
</feature>
<feature type="chain" id="PRO_0000036308" description="UPF0319 protein VP0761">
    <location>
        <begin position="21"/>
        <end position="197"/>
    </location>
</feature>
<gene>
    <name type="ordered locus">VP0761</name>
</gene>
<dbReference type="EMBL" id="BA000031">
    <property type="protein sequence ID" value="BAC59024.1"/>
    <property type="molecule type" value="Genomic_DNA"/>
</dbReference>
<dbReference type="RefSeq" id="NP_797140.1">
    <property type="nucleotide sequence ID" value="NC_004603.1"/>
</dbReference>
<dbReference type="KEGG" id="vpa:VP0761"/>
<dbReference type="PATRIC" id="fig|223926.6.peg.727"/>
<dbReference type="eggNOG" id="COG3110">
    <property type="taxonomic scope" value="Bacteria"/>
</dbReference>
<dbReference type="HOGENOM" id="CLU_073782_0_0_6"/>
<dbReference type="Proteomes" id="UP000002493">
    <property type="component" value="Chromosome 1"/>
</dbReference>
<dbReference type="HAMAP" id="MF_00789">
    <property type="entry name" value="UPF0319"/>
    <property type="match status" value="1"/>
</dbReference>
<dbReference type="InterPro" id="IPR018635">
    <property type="entry name" value="UPF0319"/>
</dbReference>
<dbReference type="PANTHER" id="PTHR38108">
    <property type="entry name" value="UPF0319 PROTEIN YCCT"/>
    <property type="match status" value="1"/>
</dbReference>
<dbReference type="PANTHER" id="PTHR38108:SF1">
    <property type="entry name" value="UPF0319 PROTEIN YCCT"/>
    <property type="match status" value="1"/>
</dbReference>
<dbReference type="Pfam" id="PF09829">
    <property type="entry name" value="DUF2057"/>
    <property type="match status" value="1"/>
</dbReference>
<sequence length="197" mass="22419">MKKTTTLLGICAILSAPAFAAQLTLQKELVPRVINGEFVYPEWISDNNSIELKDGENQLAVTVGQIVFEDGKRRKFDSQPLLLEFDAEKDAELSLTYKTFRTIEEAKAFELDPKVVLKDKNGKEVDFSMVQLRKGGLQGFRDYEREVADYNNAVNKQATKSSIAQSPAVTKTLKESFNELSREEQQEFMQWAMRNLK</sequence>
<evidence type="ECO:0000255" key="1">
    <source>
        <dbReference type="HAMAP-Rule" id="MF_00789"/>
    </source>
</evidence>
<organism>
    <name type="scientific">Vibrio parahaemolyticus serotype O3:K6 (strain RIMD 2210633)</name>
    <dbReference type="NCBI Taxonomy" id="223926"/>
    <lineage>
        <taxon>Bacteria</taxon>
        <taxon>Pseudomonadati</taxon>
        <taxon>Pseudomonadota</taxon>
        <taxon>Gammaproteobacteria</taxon>
        <taxon>Vibrionales</taxon>
        <taxon>Vibrionaceae</taxon>
        <taxon>Vibrio</taxon>
    </lineage>
</organism>
<reference key="1">
    <citation type="journal article" date="2003" name="Lancet">
        <title>Genome sequence of Vibrio parahaemolyticus: a pathogenic mechanism distinct from that of V. cholerae.</title>
        <authorList>
            <person name="Makino K."/>
            <person name="Oshima K."/>
            <person name="Kurokawa K."/>
            <person name="Yokoyama K."/>
            <person name="Uda T."/>
            <person name="Tagomori K."/>
            <person name="Iijima Y."/>
            <person name="Najima M."/>
            <person name="Nakano M."/>
            <person name="Yamashita A."/>
            <person name="Kubota Y."/>
            <person name="Kimura S."/>
            <person name="Yasunaga T."/>
            <person name="Honda T."/>
            <person name="Shinagawa H."/>
            <person name="Hattori M."/>
            <person name="Iida T."/>
        </authorList>
    </citation>
    <scope>NUCLEOTIDE SEQUENCE [LARGE SCALE GENOMIC DNA]</scope>
    <source>
        <strain>RIMD 2210633</strain>
    </source>
</reference>
<name>Y761_VIBPA</name>
<keyword id="KW-0732">Signal</keyword>
<accession>Q87RL7</accession>
<comment type="similarity">
    <text evidence="1">Belongs to the UPF0319 family.</text>
</comment>
<proteinExistence type="inferred from homology"/>